<name>YF001_HUMAN</name>
<dbReference type="EMBL" id="AK094629">
    <property type="protein sequence ID" value="BAC04390.1"/>
    <property type="molecule type" value="mRNA"/>
</dbReference>
<dbReference type="iPTMnet" id="Q8N1X5"/>
<dbReference type="PhosphoSitePlus" id="Q8N1X5"/>
<dbReference type="BioMuta" id="-"/>
<dbReference type="DMDM" id="74728615"/>
<dbReference type="MassIVE" id="Q8N1X5"/>
<dbReference type="AGR" id="HGNC:55048"/>
<dbReference type="neXtProt" id="NX_Q8N1X5"/>
<dbReference type="InParanoid" id="Q8N1X5"/>
<dbReference type="PAN-GO" id="Q8N1X5">
    <property type="GO annotations" value="0 GO annotations based on evolutionary models"/>
</dbReference>
<dbReference type="PhylomeDB" id="Q8N1X5"/>
<dbReference type="Pharos" id="Q8N1X5">
    <property type="development level" value="Tdark"/>
</dbReference>
<dbReference type="Proteomes" id="UP000005640">
    <property type="component" value="Unplaced"/>
</dbReference>
<dbReference type="RNAct" id="Q8N1X5">
    <property type="molecule type" value="protein"/>
</dbReference>
<accession>Q8N1X5</accession>
<reference key="1">
    <citation type="journal article" date="2004" name="Nat. Genet.">
        <title>Complete sequencing and characterization of 21,243 full-length human cDNAs.</title>
        <authorList>
            <person name="Ota T."/>
            <person name="Suzuki Y."/>
            <person name="Nishikawa T."/>
            <person name="Otsuki T."/>
            <person name="Sugiyama T."/>
            <person name="Irie R."/>
            <person name="Wakamatsu A."/>
            <person name="Hayashi K."/>
            <person name="Sato H."/>
            <person name="Nagai K."/>
            <person name="Kimura K."/>
            <person name="Makita H."/>
            <person name="Sekine M."/>
            <person name="Obayashi M."/>
            <person name="Nishi T."/>
            <person name="Shibahara T."/>
            <person name="Tanaka T."/>
            <person name="Ishii S."/>
            <person name="Yamamoto J."/>
            <person name="Saito K."/>
            <person name="Kawai Y."/>
            <person name="Isono Y."/>
            <person name="Nakamura Y."/>
            <person name="Nagahari K."/>
            <person name="Murakami K."/>
            <person name="Yasuda T."/>
            <person name="Iwayanagi T."/>
            <person name="Wagatsuma M."/>
            <person name="Shiratori A."/>
            <person name="Sudo H."/>
            <person name="Hosoiri T."/>
            <person name="Kaku Y."/>
            <person name="Kodaira H."/>
            <person name="Kondo H."/>
            <person name="Sugawara M."/>
            <person name="Takahashi M."/>
            <person name="Kanda K."/>
            <person name="Yokoi T."/>
            <person name="Furuya T."/>
            <person name="Kikkawa E."/>
            <person name="Omura Y."/>
            <person name="Abe K."/>
            <person name="Kamihara K."/>
            <person name="Katsuta N."/>
            <person name="Sato K."/>
            <person name="Tanikawa M."/>
            <person name="Yamazaki M."/>
            <person name="Ninomiya K."/>
            <person name="Ishibashi T."/>
            <person name="Yamashita H."/>
            <person name="Murakawa K."/>
            <person name="Fujimori K."/>
            <person name="Tanai H."/>
            <person name="Kimata M."/>
            <person name="Watanabe M."/>
            <person name="Hiraoka S."/>
            <person name="Chiba Y."/>
            <person name="Ishida S."/>
            <person name="Ono Y."/>
            <person name="Takiguchi S."/>
            <person name="Watanabe S."/>
            <person name="Yosida M."/>
            <person name="Hotuta T."/>
            <person name="Kusano J."/>
            <person name="Kanehori K."/>
            <person name="Takahashi-Fujii A."/>
            <person name="Hara H."/>
            <person name="Tanase T.-O."/>
            <person name="Nomura Y."/>
            <person name="Togiya S."/>
            <person name="Komai F."/>
            <person name="Hara R."/>
            <person name="Takeuchi K."/>
            <person name="Arita M."/>
            <person name="Imose N."/>
            <person name="Musashino K."/>
            <person name="Yuuki H."/>
            <person name="Oshima A."/>
            <person name="Sasaki N."/>
            <person name="Aotsuka S."/>
            <person name="Yoshikawa Y."/>
            <person name="Matsunawa H."/>
            <person name="Ichihara T."/>
            <person name="Shiohata N."/>
            <person name="Sano S."/>
            <person name="Moriya S."/>
            <person name="Momiyama H."/>
            <person name="Satoh N."/>
            <person name="Takami S."/>
            <person name="Terashima Y."/>
            <person name="Suzuki O."/>
            <person name="Nakagawa S."/>
            <person name="Senoh A."/>
            <person name="Mizoguchi H."/>
            <person name="Goto Y."/>
            <person name="Shimizu F."/>
            <person name="Wakebe H."/>
            <person name="Hishigaki H."/>
            <person name="Watanabe T."/>
            <person name="Sugiyama A."/>
            <person name="Takemoto M."/>
            <person name="Kawakami B."/>
            <person name="Yamazaki M."/>
            <person name="Watanabe K."/>
            <person name="Kumagai A."/>
            <person name="Itakura S."/>
            <person name="Fukuzumi Y."/>
            <person name="Fujimori Y."/>
            <person name="Komiyama M."/>
            <person name="Tashiro H."/>
            <person name="Tanigami A."/>
            <person name="Fujiwara T."/>
            <person name="Ono T."/>
            <person name="Yamada K."/>
            <person name="Fujii Y."/>
            <person name="Ozaki K."/>
            <person name="Hirao M."/>
            <person name="Ohmori Y."/>
            <person name="Kawabata A."/>
            <person name="Hikiji T."/>
            <person name="Kobatake N."/>
            <person name="Inagaki H."/>
            <person name="Ikema Y."/>
            <person name="Okamoto S."/>
            <person name="Okitani R."/>
            <person name="Kawakami T."/>
            <person name="Noguchi S."/>
            <person name="Itoh T."/>
            <person name="Shigeta K."/>
            <person name="Senba T."/>
            <person name="Matsumura K."/>
            <person name="Nakajima Y."/>
            <person name="Mizuno T."/>
            <person name="Morinaga M."/>
            <person name="Sasaki M."/>
            <person name="Togashi T."/>
            <person name="Oyama M."/>
            <person name="Hata H."/>
            <person name="Watanabe M."/>
            <person name="Komatsu T."/>
            <person name="Mizushima-Sugano J."/>
            <person name="Satoh T."/>
            <person name="Shirai Y."/>
            <person name="Takahashi Y."/>
            <person name="Nakagawa K."/>
            <person name="Okumura K."/>
            <person name="Nagase T."/>
            <person name="Nomura N."/>
            <person name="Kikuchi H."/>
            <person name="Masuho Y."/>
            <person name="Yamashita R."/>
            <person name="Nakai K."/>
            <person name="Yada T."/>
            <person name="Nakamura Y."/>
            <person name="Ohara O."/>
            <person name="Isogai T."/>
            <person name="Sugano S."/>
        </authorList>
    </citation>
    <scope>NUCLEOTIDE SEQUENCE [LARGE SCALE MRNA]</scope>
    <source>
        <tissue>Amygdala</tissue>
    </source>
</reference>
<organism>
    <name type="scientific">Homo sapiens</name>
    <name type="common">Human</name>
    <dbReference type="NCBI Taxonomy" id="9606"/>
    <lineage>
        <taxon>Eukaryota</taxon>
        <taxon>Metazoa</taxon>
        <taxon>Chordata</taxon>
        <taxon>Craniata</taxon>
        <taxon>Vertebrata</taxon>
        <taxon>Euteleostomi</taxon>
        <taxon>Mammalia</taxon>
        <taxon>Eutheria</taxon>
        <taxon>Euarchontoglires</taxon>
        <taxon>Primates</taxon>
        <taxon>Haplorrhini</taxon>
        <taxon>Catarrhini</taxon>
        <taxon>Hominidae</taxon>
        <taxon>Homo</taxon>
    </lineage>
</organism>
<feature type="chain" id="PRO_0000304681" description="Uncharacterized protein FLJ37310">
    <location>
        <begin position="1"/>
        <end position="172"/>
    </location>
</feature>
<feature type="region of interest" description="Disordered" evidence="1">
    <location>
        <begin position="1"/>
        <end position="172"/>
    </location>
</feature>
<feature type="compositionally biased region" description="Low complexity" evidence="1">
    <location>
        <begin position="1"/>
        <end position="28"/>
    </location>
</feature>
<feature type="compositionally biased region" description="Basic residues" evidence="1">
    <location>
        <begin position="58"/>
        <end position="68"/>
    </location>
</feature>
<feature type="compositionally biased region" description="Gly residues" evidence="1">
    <location>
        <begin position="80"/>
        <end position="100"/>
    </location>
</feature>
<feature type="compositionally biased region" description="Low complexity" evidence="1">
    <location>
        <begin position="129"/>
        <end position="138"/>
    </location>
</feature>
<feature type="compositionally biased region" description="Gly residues" evidence="1">
    <location>
        <begin position="139"/>
        <end position="165"/>
    </location>
</feature>
<sequence>MAAAGVTAKAGGGTSAAAASLIRARSPAWPRRAVSCSLARGTGAPKCGSDSTPPPPLPRRRSRARRGHLGNGDRPSAGATVGGEGQASQIGGGGGGGGGRRNATGRGRRRRQGGAGSAVKCRRDSVLEPGLASSPGVAPAGGSGGLWSGAGLCSGLGARGFPGGRRSGRDAG</sequence>
<protein>
    <recommendedName>
        <fullName>Uncharacterized protein FLJ37310</fullName>
    </recommendedName>
</protein>
<keyword id="KW-1267">Proteomics identification</keyword>
<keyword id="KW-1185">Reference proteome</keyword>
<evidence type="ECO:0000256" key="1">
    <source>
        <dbReference type="SAM" id="MobiDB-lite"/>
    </source>
</evidence>
<proteinExistence type="evidence at protein level"/>